<organism>
    <name type="scientific">Escherichia coli (strain K12)</name>
    <dbReference type="NCBI Taxonomy" id="83333"/>
    <lineage>
        <taxon>Bacteria</taxon>
        <taxon>Pseudomonadati</taxon>
        <taxon>Pseudomonadota</taxon>
        <taxon>Gammaproteobacteria</taxon>
        <taxon>Enterobacterales</taxon>
        <taxon>Enterobacteriaceae</taxon>
        <taxon>Escherichia</taxon>
    </lineage>
</organism>
<dbReference type="EMBL" id="U00096">
    <property type="protein sequence ID" value="AAC74871.1"/>
    <property type="molecule type" value="Genomic_DNA"/>
</dbReference>
<dbReference type="EMBL" id="AP009048">
    <property type="protein sequence ID" value="BAA15596.2"/>
    <property type="molecule type" value="Genomic_DNA"/>
</dbReference>
<dbReference type="PIR" id="A64941">
    <property type="entry name" value="A64941"/>
</dbReference>
<dbReference type="RefSeq" id="NP_416315.1">
    <property type="nucleotide sequence ID" value="NC_000913.3"/>
</dbReference>
<dbReference type="SMR" id="P0ABD1"/>
<dbReference type="BioGRID" id="4260336">
    <property type="interactions" value="198"/>
</dbReference>
<dbReference type="FunCoup" id="P0ABD1">
    <property type="interactions" value="101"/>
</dbReference>
<dbReference type="STRING" id="511145.b1801"/>
<dbReference type="PaxDb" id="511145-b1801"/>
<dbReference type="EnsemblBacteria" id="AAC74871">
    <property type="protein sequence ID" value="AAC74871"/>
    <property type="gene ID" value="b1801"/>
</dbReference>
<dbReference type="GeneID" id="947326"/>
<dbReference type="KEGG" id="ecj:JW5293"/>
<dbReference type="KEGG" id="eco:b1801"/>
<dbReference type="PATRIC" id="fig|511145.12.peg.1877"/>
<dbReference type="EchoBASE" id="EB3281"/>
<dbReference type="eggNOG" id="COG1292">
    <property type="taxonomic scope" value="Bacteria"/>
</dbReference>
<dbReference type="HOGENOM" id="CLU_010118_6_0_6"/>
<dbReference type="InParanoid" id="P0ABD1"/>
<dbReference type="OMA" id="WASMLFC"/>
<dbReference type="OrthoDB" id="9775735at2"/>
<dbReference type="PhylomeDB" id="P0ABD1"/>
<dbReference type="BioCyc" id="EcoCyc:YEAV-MONOMER"/>
<dbReference type="PRO" id="PR:P0ABD1"/>
<dbReference type="Proteomes" id="UP000000625">
    <property type="component" value="Chromosome"/>
</dbReference>
<dbReference type="GO" id="GO:0005886">
    <property type="term" value="C:plasma membrane"/>
    <property type="evidence" value="ECO:0000314"/>
    <property type="project" value="EcoCyc"/>
</dbReference>
<dbReference type="GO" id="GO:0022857">
    <property type="term" value="F:transmembrane transporter activity"/>
    <property type="evidence" value="ECO:0000318"/>
    <property type="project" value="GO_Central"/>
</dbReference>
<dbReference type="InterPro" id="IPR018093">
    <property type="entry name" value="BCCT_CS"/>
</dbReference>
<dbReference type="InterPro" id="IPR000060">
    <property type="entry name" value="BCCT_transptr"/>
</dbReference>
<dbReference type="NCBIfam" id="TIGR00842">
    <property type="entry name" value="bcct"/>
    <property type="match status" value="1"/>
</dbReference>
<dbReference type="NCBIfam" id="NF007412">
    <property type="entry name" value="PRK09950.1"/>
    <property type="match status" value="1"/>
</dbReference>
<dbReference type="PANTHER" id="PTHR30047:SF12">
    <property type="entry name" value="BCCT-FAMILY TRANSPORTER"/>
    <property type="match status" value="1"/>
</dbReference>
<dbReference type="PANTHER" id="PTHR30047">
    <property type="entry name" value="HIGH-AFFINITY CHOLINE TRANSPORT PROTEIN-RELATED"/>
    <property type="match status" value="1"/>
</dbReference>
<dbReference type="Pfam" id="PF02028">
    <property type="entry name" value="BCCT"/>
    <property type="match status" value="1"/>
</dbReference>
<dbReference type="PROSITE" id="PS01303">
    <property type="entry name" value="BCCT"/>
    <property type="match status" value="1"/>
</dbReference>
<gene>
    <name type="primary">yeaV</name>
    <name type="ordered locus">b1801</name>
    <name type="ordered locus">JW5293</name>
</gene>
<comment type="function">
    <text>Probable transporter whose substrate is unknown. Is not involved in aerobic D-malate transport.</text>
</comment>
<comment type="subcellular location">
    <subcellularLocation>
        <location evidence="3">Cell inner membrane</location>
        <topology evidence="3">Multi-pass membrane protein</topology>
    </subcellularLocation>
</comment>
<comment type="disruption phenotype">
    <text evidence="2">Deletion of yeaV has no effect on the aerobic growth with D-malate as the sole carbon source.</text>
</comment>
<comment type="similarity">
    <text evidence="3">Belongs to the BCCT transporter (TC 2.A.15) family.</text>
</comment>
<sequence length="481" mass="52881">MVLLAMGLVIYLATSKYGNIRLGEGKPEYSTLSWLFMFICAGLGSSTLYWGVAEWAYYYQTPGLNIAPRSQQALEFSVPYSFFHWGISAWATYTLASLIMAYHFHVRKNKGLSLSGIIAAITGVRPQGPWGKLVDLMFLIATVGALTISLVVTAATFTRGLSALTGLPDNFTVQAFVILLSGGIFCLSSWIGINNGLQRLSKMVGWGAFLLPLLVLIVGPTEFITNSIINAIGLTTQNFLQMSLFTDPLGDGSFTRNWTVFYWLWWISYTPGVAMFVTRVSRGRKIKEVIWGLILGSTVGCWFFFGVMESYAIHQFINGVINVPQVLETLGGETAVQQVLMSLPAGKLFLAAYLGVMIIFLASHMDAVAYTMAATSTRNLQEGDDPDRGLRLFWCVVITLIPLSILFTGASLETMKTTVVLTALPFLVILLVKVGGFIRWLKQDYADIPAHQVEHYLPQTPVEALEKTPVLPAGTVFKGDN</sequence>
<name>YEAV_ECOLI</name>
<protein>
    <recommendedName>
        <fullName>Uncharacterized transporter YeaV</fullName>
    </recommendedName>
</protein>
<feature type="chain" id="PRO_0000201494" description="Uncharacterized transporter YeaV">
    <location>
        <begin position="1"/>
        <end position="481"/>
    </location>
</feature>
<feature type="transmembrane region" description="Helical" evidence="1">
    <location>
        <begin position="32"/>
        <end position="52"/>
    </location>
</feature>
<feature type="transmembrane region" description="Helical" evidence="1">
    <location>
        <begin position="82"/>
        <end position="102"/>
    </location>
</feature>
<feature type="transmembrane region" description="Helical" evidence="1">
    <location>
        <begin position="137"/>
        <end position="157"/>
    </location>
</feature>
<feature type="transmembrane region" description="Helical" evidence="1">
    <location>
        <begin position="173"/>
        <end position="193"/>
    </location>
</feature>
<feature type="transmembrane region" description="Helical" evidence="1">
    <location>
        <begin position="204"/>
        <end position="224"/>
    </location>
</feature>
<feature type="transmembrane region" description="Helical" evidence="1">
    <location>
        <begin position="258"/>
        <end position="278"/>
    </location>
</feature>
<feature type="transmembrane region" description="Helical" evidence="1">
    <location>
        <begin position="289"/>
        <end position="309"/>
    </location>
</feature>
<feature type="transmembrane region" description="Helical" evidence="1">
    <location>
        <begin position="348"/>
        <end position="368"/>
    </location>
</feature>
<feature type="transmembrane region" description="Helical" evidence="1">
    <location>
        <begin position="392"/>
        <end position="412"/>
    </location>
</feature>
<feature type="transmembrane region" description="Helical" evidence="1">
    <location>
        <begin position="418"/>
        <end position="438"/>
    </location>
</feature>
<accession>P0ABD1</accession>
<accession>P76252</accession>
<accession>P97208</accession>
<proteinExistence type="inferred from homology"/>
<reference key="1">
    <citation type="journal article" date="1996" name="DNA Res.">
        <title>A 460-kb DNA sequence of the Escherichia coli K-12 genome corresponding to the 40.1-50.0 min region on the linkage map.</title>
        <authorList>
            <person name="Itoh T."/>
            <person name="Aiba H."/>
            <person name="Baba T."/>
            <person name="Fujita K."/>
            <person name="Hayashi K."/>
            <person name="Inada T."/>
            <person name="Isono K."/>
            <person name="Kasai H."/>
            <person name="Kimura S."/>
            <person name="Kitakawa M."/>
            <person name="Kitagawa M."/>
            <person name="Makino K."/>
            <person name="Miki T."/>
            <person name="Mizobuchi K."/>
            <person name="Mori H."/>
            <person name="Mori T."/>
            <person name="Motomura K."/>
            <person name="Nakade S."/>
            <person name="Nakamura Y."/>
            <person name="Nashimoto H."/>
            <person name="Nishio Y."/>
            <person name="Oshima T."/>
            <person name="Saito N."/>
            <person name="Sampei G."/>
            <person name="Seki Y."/>
            <person name="Sivasundaram S."/>
            <person name="Tagami H."/>
            <person name="Takeda J."/>
            <person name="Takemoto K."/>
            <person name="Wada C."/>
            <person name="Yamamoto Y."/>
            <person name="Horiuchi T."/>
        </authorList>
    </citation>
    <scope>NUCLEOTIDE SEQUENCE [LARGE SCALE GENOMIC DNA]</scope>
    <source>
        <strain>K12 / W3110 / ATCC 27325 / DSM 5911</strain>
    </source>
</reference>
<reference key="2">
    <citation type="journal article" date="1997" name="Science">
        <title>The complete genome sequence of Escherichia coli K-12.</title>
        <authorList>
            <person name="Blattner F.R."/>
            <person name="Plunkett G. III"/>
            <person name="Bloch C.A."/>
            <person name="Perna N.T."/>
            <person name="Burland V."/>
            <person name="Riley M."/>
            <person name="Collado-Vides J."/>
            <person name="Glasner J.D."/>
            <person name="Rode C.K."/>
            <person name="Mayhew G.F."/>
            <person name="Gregor J."/>
            <person name="Davis N.W."/>
            <person name="Kirkpatrick H.A."/>
            <person name="Goeden M.A."/>
            <person name="Rose D.J."/>
            <person name="Mau B."/>
            <person name="Shao Y."/>
        </authorList>
    </citation>
    <scope>NUCLEOTIDE SEQUENCE [LARGE SCALE GENOMIC DNA]</scope>
    <source>
        <strain>K12 / MG1655 / ATCC 47076</strain>
    </source>
</reference>
<reference key="3">
    <citation type="journal article" date="2006" name="Mol. Syst. Biol.">
        <title>Highly accurate genome sequences of Escherichia coli K-12 strains MG1655 and W3110.</title>
        <authorList>
            <person name="Hayashi K."/>
            <person name="Morooka N."/>
            <person name="Yamamoto Y."/>
            <person name="Fujita K."/>
            <person name="Isono K."/>
            <person name="Choi S."/>
            <person name="Ohtsubo E."/>
            <person name="Baba T."/>
            <person name="Wanner B.L."/>
            <person name="Mori H."/>
            <person name="Horiuchi T."/>
        </authorList>
    </citation>
    <scope>NUCLEOTIDE SEQUENCE [LARGE SCALE GENOMIC DNA]</scope>
    <source>
        <strain>K12 / W3110 / ATCC 27325 / DSM 5911</strain>
    </source>
</reference>
<reference key="4">
    <citation type="journal article" date="2010" name="J. Bacteriol.">
        <title>Regulation of aerobic and anaerobic D-malate metabolism of Escherichia coli by the LysR-type regulator DmlR (YeaT).</title>
        <authorList>
            <person name="Lukas H."/>
            <person name="Reimann J."/>
            <person name="Kim O.B."/>
            <person name="Grimpo J."/>
            <person name="Unden G."/>
        </authorList>
    </citation>
    <scope>DISRUPTION PHENOTYPE</scope>
    <source>
        <strain>K12 / MC4100 / ATCC 35695 / DSM 6574</strain>
    </source>
</reference>
<keyword id="KW-0997">Cell inner membrane</keyword>
<keyword id="KW-1003">Cell membrane</keyword>
<keyword id="KW-0472">Membrane</keyword>
<keyword id="KW-1185">Reference proteome</keyword>
<keyword id="KW-0812">Transmembrane</keyword>
<keyword id="KW-1133">Transmembrane helix</keyword>
<keyword id="KW-0813">Transport</keyword>
<evidence type="ECO:0000255" key="1"/>
<evidence type="ECO:0000269" key="2">
    <source>
    </source>
</evidence>
<evidence type="ECO:0000305" key="3"/>